<protein>
    <recommendedName>
        <fullName evidence="1">ATP synthase subunit a</fullName>
    </recommendedName>
    <alternativeName>
        <fullName evidence="1">ATP synthase F0 sector subunit a</fullName>
    </alternativeName>
    <alternativeName>
        <fullName evidence="1">F-ATPase subunit 6</fullName>
    </alternativeName>
</protein>
<dbReference type="EMBL" id="CP000783">
    <property type="protein sequence ID" value="ABU79198.1"/>
    <property type="molecule type" value="Genomic_DNA"/>
</dbReference>
<dbReference type="RefSeq" id="WP_004386172.1">
    <property type="nucleotide sequence ID" value="NC_009778.1"/>
</dbReference>
<dbReference type="SMR" id="A7MMW0"/>
<dbReference type="GeneID" id="56732652"/>
<dbReference type="KEGG" id="esa:ESA_04012"/>
<dbReference type="HOGENOM" id="CLU_041018_1_0_6"/>
<dbReference type="Proteomes" id="UP000000260">
    <property type="component" value="Chromosome"/>
</dbReference>
<dbReference type="GO" id="GO:0005886">
    <property type="term" value="C:plasma membrane"/>
    <property type="evidence" value="ECO:0007669"/>
    <property type="project" value="UniProtKB-SubCell"/>
</dbReference>
<dbReference type="GO" id="GO:0045259">
    <property type="term" value="C:proton-transporting ATP synthase complex"/>
    <property type="evidence" value="ECO:0007669"/>
    <property type="project" value="UniProtKB-KW"/>
</dbReference>
<dbReference type="GO" id="GO:0046933">
    <property type="term" value="F:proton-transporting ATP synthase activity, rotational mechanism"/>
    <property type="evidence" value="ECO:0007669"/>
    <property type="project" value="UniProtKB-UniRule"/>
</dbReference>
<dbReference type="GO" id="GO:0042777">
    <property type="term" value="P:proton motive force-driven plasma membrane ATP synthesis"/>
    <property type="evidence" value="ECO:0007669"/>
    <property type="project" value="TreeGrafter"/>
</dbReference>
<dbReference type="CDD" id="cd00310">
    <property type="entry name" value="ATP-synt_Fo_a_6"/>
    <property type="match status" value="1"/>
</dbReference>
<dbReference type="FunFam" id="1.20.120.220:FF:000002">
    <property type="entry name" value="ATP synthase subunit a"/>
    <property type="match status" value="1"/>
</dbReference>
<dbReference type="Gene3D" id="1.20.120.220">
    <property type="entry name" value="ATP synthase, F0 complex, subunit A"/>
    <property type="match status" value="1"/>
</dbReference>
<dbReference type="HAMAP" id="MF_01393">
    <property type="entry name" value="ATP_synth_a_bact"/>
    <property type="match status" value="1"/>
</dbReference>
<dbReference type="InterPro" id="IPR045082">
    <property type="entry name" value="ATP_syn_F0_a_bact/chloroplast"/>
</dbReference>
<dbReference type="InterPro" id="IPR000568">
    <property type="entry name" value="ATP_synth_F0_asu"/>
</dbReference>
<dbReference type="InterPro" id="IPR023011">
    <property type="entry name" value="ATP_synth_F0_asu_AS"/>
</dbReference>
<dbReference type="InterPro" id="IPR035908">
    <property type="entry name" value="F0_ATP_A_sf"/>
</dbReference>
<dbReference type="NCBIfam" id="TIGR01131">
    <property type="entry name" value="ATP_synt_6_or_A"/>
    <property type="match status" value="1"/>
</dbReference>
<dbReference type="NCBIfam" id="NF004477">
    <property type="entry name" value="PRK05815.1-1"/>
    <property type="match status" value="1"/>
</dbReference>
<dbReference type="PANTHER" id="PTHR42823">
    <property type="entry name" value="ATP SYNTHASE SUBUNIT A, CHLOROPLASTIC"/>
    <property type="match status" value="1"/>
</dbReference>
<dbReference type="PANTHER" id="PTHR42823:SF3">
    <property type="entry name" value="ATP SYNTHASE SUBUNIT A, CHLOROPLASTIC"/>
    <property type="match status" value="1"/>
</dbReference>
<dbReference type="Pfam" id="PF00119">
    <property type="entry name" value="ATP-synt_A"/>
    <property type="match status" value="1"/>
</dbReference>
<dbReference type="PRINTS" id="PR00123">
    <property type="entry name" value="ATPASEA"/>
</dbReference>
<dbReference type="SUPFAM" id="SSF81336">
    <property type="entry name" value="F1F0 ATP synthase subunit A"/>
    <property type="match status" value="1"/>
</dbReference>
<dbReference type="PROSITE" id="PS00449">
    <property type="entry name" value="ATPASE_A"/>
    <property type="match status" value="1"/>
</dbReference>
<sequence>MSAGEISTPQEYIGHHLNNLQIDLRTFSLVDPHNPPATFWTLNIDSMFFSVVLGLLFLVLFRKVAKHATSGVPGKFQTAVELVIGFVHGSVQDMYHGKSKLIAPLALTIFVWVFLMNLMDLLPIDLLPYIGEHVFGLPALRVVPSADVNITLSMALGVFILILFYSIKMKGVGGFTKELTLQPFNHPVFIPINLILEGVSLLSKPVSLGLRLFGNMYAGELIFILIAGLLPWWSQWLLNVPWAIFHILIITLQAFIFMVLTIVYLSMASEEH</sequence>
<gene>
    <name evidence="1" type="primary">atpB</name>
    <name type="ordered locus">ESA_04012</name>
</gene>
<comment type="function">
    <text evidence="1">Key component of the proton channel; it plays a direct role in the translocation of protons across the membrane.</text>
</comment>
<comment type="subunit">
    <text evidence="1">F-type ATPases have 2 components, CF(1) - the catalytic core - and CF(0) - the membrane proton channel. CF(1) has five subunits: alpha(3), beta(3), gamma(1), delta(1), epsilon(1). CF(0) has three main subunits: a(1), b(2) and c(9-12). The alpha and beta chains form an alternating ring which encloses part of the gamma chain. CF(1) is attached to CF(0) by a central stalk formed by the gamma and epsilon chains, while a peripheral stalk is formed by the delta and b chains.</text>
</comment>
<comment type="subcellular location">
    <subcellularLocation>
        <location evidence="1">Cell inner membrane</location>
        <topology evidence="1">Multi-pass membrane protein</topology>
    </subcellularLocation>
</comment>
<comment type="similarity">
    <text evidence="1">Belongs to the ATPase A chain family.</text>
</comment>
<reference key="1">
    <citation type="journal article" date="2010" name="PLoS ONE">
        <title>Genome sequence of Cronobacter sakazakii BAA-894 and comparative genomic hybridization analysis with other Cronobacter species.</title>
        <authorList>
            <person name="Kucerova E."/>
            <person name="Clifton S.W."/>
            <person name="Xia X.Q."/>
            <person name="Long F."/>
            <person name="Porwollik S."/>
            <person name="Fulton L."/>
            <person name="Fronick C."/>
            <person name="Minx P."/>
            <person name="Kyung K."/>
            <person name="Warren W."/>
            <person name="Fulton R."/>
            <person name="Feng D."/>
            <person name="Wollam A."/>
            <person name="Shah N."/>
            <person name="Bhonagiri V."/>
            <person name="Nash W.E."/>
            <person name="Hallsworth-Pepin K."/>
            <person name="Wilson R.K."/>
            <person name="McClelland M."/>
            <person name="Forsythe S.J."/>
        </authorList>
    </citation>
    <scope>NUCLEOTIDE SEQUENCE [LARGE SCALE GENOMIC DNA]</scope>
    <source>
        <strain>ATCC BAA-894</strain>
    </source>
</reference>
<name>ATP6_CROS8</name>
<feature type="chain" id="PRO_0000362294" description="ATP synthase subunit a">
    <location>
        <begin position="1"/>
        <end position="272"/>
    </location>
</feature>
<feature type="transmembrane region" description="Helical" evidence="1">
    <location>
        <begin position="41"/>
        <end position="61"/>
    </location>
</feature>
<feature type="transmembrane region" description="Helical" evidence="1">
    <location>
        <begin position="101"/>
        <end position="121"/>
    </location>
</feature>
<feature type="transmembrane region" description="Helical" evidence="1">
    <location>
        <begin position="147"/>
        <end position="167"/>
    </location>
</feature>
<feature type="transmembrane region" description="Helical" evidence="1">
    <location>
        <begin position="212"/>
        <end position="232"/>
    </location>
</feature>
<feature type="transmembrane region" description="Helical" evidence="1">
    <location>
        <begin position="243"/>
        <end position="263"/>
    </location>
</feature>
<accession>A7MMW0</accession>
<proteinExistence type="inferred from homology"/>
<evidence type="ECO:0000255" key="1">
    <source>
        <dbReference type="HAMAP-Rule" id="MF_01393"/>
    </source>
</evidence>
<keyword id="KW-0066">ATP synthesis</keyword>
<keyword id="KW-0997">Cell inner membrane</keyword>
<keyword id="KW-1003">Cell membrane</keyword>
<keyword id="KW-0138">CF(0)</keyword>
<keyword id="KW-0375">Hydrogen ion transport</keyword>
<keyword id="KW-0406">Ion transport</keyword>
<keyword id="KW-0472">Membrane</keyword>
<keyword id="KW-1185">Reference proteome</keyword>
<keyword id="KW-0812">Transmembrane</keyword>
<keyword id="KW-1133">Transmembrane helix</keyword>
<keyword id="KW-0813">Transport</keyword>
<organism>
    <name type="scientific">Cronobacter sakazakii (strain ATCC BAA-894)</name>
    <name type="common">Enterobacter sakazakii</name>
    <dbReference type="NCBI Taxonomy" id="290339"/>
    <lineage>
        <taxon>Bacteria</taxon>
        <taxon>Pseudomonadati</taxon>
        <taxon>Pseudomonadota</taxon>
        <taxon>Gammaproteobacteria</taxon>
        <taxon>Enterobacterales</taxon>
        <taxon>Enterobacteriaceae</taxon>
        <taxon>Cronobacter</taxon>
    </lineage>
</organism>